<comment type="catalytic activity">
    <reaction evidence="1">
        <text>D-glucuronate = D-fructuronate</text>
        <dbReference type="Rhea" id="RHEA:13049"/>
        <dbReference type="ChEBI" id="CHEBI:58720"/>
        <dbReference type="ChEBI" id="CHEBI:59863"/>
        <dbReference type="EC" id="5.3.1.12"/>
    </reaction>
</comment>
<comment type="catalytic activity">
    <reaction evidence="1">
        <text>aldehydo-D-galacturonate = keto-D-tagaturonate</text>
        <dbReference type="Rhea" id="RHEA:27702"/>
        <dbReference type="ChEBI" id="CHEBI:12952"/>
        <dbReference type="ChEBI" id="CHEBI:17886"/>
        <dbReference type="EC" id="5.3.1.12"/>
    </reaction>
</comment>
<comment type="pathway">
    <text evidence="1">Carbohydrate metabolism; pentose and glucuronate interconversion.</text>
</comment>
<comment type="similarity">
    <text evidence="1">Belongs to the metallo-dependent hydrolases superfamily. Uronate isomerase family.</text>
</comment>
<evidence type="ECO:0000255" key="1">
    <source>
        <dbReference type="HAMAP-Rule" id="MF_00675"/>
    </source>
</evidence>
<organism>
    <name type="scientific">Streptococcus equi subsp. zooepidemicus (strain MGCS10565)</name>
    <dbReference type="NCBI Taxonomy" id="552526"/>
    <lineage>
        <taxon>Bacteria</taxon>
        <taxon>Bacillati</taxon>
        <taxon>Bacillota</taxon>
        <taxon>Bacilli</taxon>
        <taxon>Lactobacillales</taxon>
        <taxon>Streptococcaceae</taxon>
        <taxon>Streptococcus</taxon>
    </lineage>
</organism>
<gene>
    <name evidence="1" type="primary">uxaC</name>
    <name type="ordered locus">Sez_0689</name>
</gene>
<feature type="chain" id="PRO_1000131610" description="Uronate isomerase">
    <location>
        <begin position="1"/>
        <end position="465"/>
    </location>
</feature>
<reference key="1">
    <citation type="journal article" date="2008" name="PLoS ONE">
        <title>Genome sequence of a lancefield group C Streptococcus zooepidemicus strain causing epidemic nephritis: new information about an old disease.</title>
        <authorList>
            <person name="Beres S.B."/>
            <person name="Sesso R."/>
            <person name="Pinto S.W.L."/>
            <person name="Hoe N.P."/>
            <person name="Porcella S.F."/>
            <person name="Deleo F.R."/>
            <person name="Musser J.M."/>
        </authorList>
    </citation>
    <scope>NUCLEOTIDE SEQUENCE [LARGE SCALE GENOMIC DNA]</scope>
    <source>
        <strain>MGCS10565</strain>
    </source>
</reference>
<dbReference type="EC" id="5.3.1.12" evidence="1"/>
<dbReference type="EMBL" id="CP001129">
    <property type="protein sequence ID" value="ACG62054.1"/>
    <property type="molecule type" value="Genomic_DNA"/>
</dbReference>
<dbReference type="RefSeq" id="WP_012515330.1">
    <property type="nucleotide sequence ID" value="NC_011134.1"/>
</dbReference>
<dbReference type="SMR" id="B4U237"/>
<dbReference type="KEGG" id="sez:Sez_0689"/>
<dbReference type="HOGENOM" id="CLU_044465_1_0_9"/>
<dbReference type="UniPathway" id="UPA00246"/>
<dbReference type="Proteomes" id="UP000001873">
    <property type="component" value="Chromosome"/>
</dbReference>
<dbReference type="GO" id="GO:0008880">
    <property type="term" value="F:glucuronate isomerase activity"/>
    <property type="evidence" value="ECO:0007669"/>
    <property type="project" value="UniProtKB-UniRule"/>
</dbReference>
<dbReference type="GO" id="GO:0019698">
    <property type="term" value="P:D-galacturonate catabolic process"/>
    <property type="evidence" value="ECO:0007669"/>
    <property type="project" value="TreeGrafter"/>
</dbReference>
<dbReference type="GO" id="GO:0042840">
    <property type="term" value="P:D-glucuronate catabolic process"/>
    <property type="evidence" value="ECO:0007669"/>
    <property type="project" value="TreeGrafter"/>
</dbReference>
<dbReference type="Gene3D" id="3.20.20.140">
    <property type="entry name" value="Metal-dependent hydrolases"/>
    <property type="match status" value="1"/>
</dbReference>
<dbReference type="Gene3D" id="1.10.2020.10">
    <property type="entry name" value="uronate isomerase, domain 2, chain A"/>
    <property type="match status" value="1"/>
</dbReference>
<dbReference type="HAMAP" id="MF_00675">
    <property type="entry name" value="UxaC"/>
    <property type="match status" value="1"/>
</dbReference>
<dbReference type="InterPro" id="IPR032466">
    <property type="entry name" value="Metal_Hydrolase"/>
</dbReference>
<dbReference type="InterPro" id="IPR003766">
    <property type="entry name" value="Uronate_isomerase"/>
</dbReference>
<dbReference type="NCBIfam" id="NF002794">
    <property type="entry name" value="PRK02925.1"/>
    <property type="match status" value="1"/>
</dbReference>
<dbReference type="PANTHER" id="PTHR30068">
    <property type="entry name" value="URONATE ISOMERASE"/>
    <property type="match status" value="1"/>
</dbReference>
<dbReference type="PANTHER" id="PTHR30068:SF4">
    <property type="entry name" value="URONATE ISOMERASE"/>
    <property type="match status" value="1"/>
</dbReference>
<dbReference type="Pfam" id="PF02614">
    <property type="entry name" value="UxaC"/>
    <property type="match status" value="1"/>
</dbReference>
<dbReference type="SUPFAM" id="SSF51556">
    <property type="entry name" value="Metallo-dependent hydrolases"/>
    <property type="match status" value="1"/>
</dbReference>
<proteinExistence type="inferred from homology"/>
<protein>
    <recommendedName>
        <fullName evidence="1">Uronate isomerase</fullName>
        <ecNumber evidence="1">5.3.1.12</ecNumber>
    </recommendedName>
    <alternativeName>
        <fullName evidence="1">Glucuronate isomerase</fullName>
    </alternativeName>
    <alternativeName>
        <fullName evidence="1">Uronic isomerase</fullName>
    </alternativeName>
</protein>
<name>UXAC_STREM</name>
<accession>B4U237</accession>
<sequence>MAFNDDNFMLKNEAAKRLYQQIKDQPIFDYHCHLDPKEIFEDKVYDNIVDLWLGGDHYKWRLMRANGISEEEITGSASKLDKFKAFARTLQRSYGNPVYHWSVMELKNVFGVCELLTEDNAEEIYHRINAYLVEHQISPRKLIADSRVRFIGTTDHPLDDLAWHKRLTADDTFETVVAPTFRPDEAFIEHQRFADFVARLAQATGRTITDFKSFIAAMEERIAYFAENGCKASDISFTEIVFEAAEPEQLDRLMTRVLEGYQPQPLEIKQWQTAVFAELCRLYKHYGFVTQVHFGALRNNHSAIFNKLGADVGVDSLGDQAALAINMNRLLDHLVQRDSLPKMIWYNLNPSYNITVPNTLANFQANENGIAGYLQFGAGWWFADTKLGMISQMNALAEQGLLANFVGMLTDSRSFLSYQRHDYFRRILSTYLGEWIEEGEVPEDYQVLGSMAKDIAYNNAIQYFS</sequence>
<keyword id="KW-0413">Isomerase</keyword>